<reference key="1">
    <citation type="journal article" date="2007" name="Nature">
        <title>Evolution of genes and genomes on the Drosophila phylogeny.</title>
        <authorList>
            <consortium name="Drosophila 12 genomes consortium"/>
        </authorList>
    </citation>
    <scope>NUCLEOTIDE SEQUENCE [LARGE SCALE GENOMIC DNA]</scope>
    <source>
        <strain>Tucson 15010-1051.87</strain>
    </source>
</reference>
<name>EI3F2_DROVI</name>
<gene>
    <name evidence="1" type="primary">eIF3f2</name>
    <name evidence="1" type="synonym">eIF3-S5-2</name>
    <name type="ORF">GJ17826</name>
</gene>
<evidence type="ECO:0000255" key="1">
    <source>
        <dbReference type="HAMAP-Rule" id="MF_03005"/>
    </source>
</evidence>
<evidence type="ECO:0000255" key="2">
    <source>
        <dbReference type="PROSITE-ProRule" id="PRU01182"/>
    </source>
</evidence>
<sequence>MSISNYKLQTKVRLQPLVLFQIIAAYERRPKTAKMAVGTLLGRRDRCNDIIEITNSYTVQHKEQQIGEMEQFKLDTQYASEMFELNQITYPQEKIIGWYSTGKSLSRSAAALHAYYSRECGDVQPLHLLVDTTLRGGHLSTRLYCGVTMGVPGGTRGLLFTLLPLLKLNTDGDESVALRLMQKQALHPTKQLGRMLPELVHVMEATRELEQKLELVMRYINDVLARKRRPDNSIGRALHDALTSVPLLDAESFRLMFNANVRNMLMSITLSTMIKTQMELSEKLSYLPDH</sequence>
<accession>B4MDZ0</accession>
<protein>
    <recommendedName>
        <fullName evidence="1">Eukaryotic translation initiation factor 3 subunit F-2</fullName>
        <shortName evidence="1">eIF3f-2</shortName>
    </recommendedName>
    <alternativeName>
        <fullName evidence="1">Eukaryotic translation initiation factor 3 subunit 5-2</fullName>
    </alternativeName>
</protein>
<dbReference type="EMBL" id="CH940662">
    <property type="protein sequence ID" value="EDW58755.1"/>
    <property type="molecule type" value="Genomic_DNA"/>
</dbReference>
<dbReference type="RefSeq" id="XP_002059343.1">
    <property type="nucleotide sequence ID" value="XM_002059307.4"/>
</dbReference>
<dbReference type="SMR" id="B4MDZ0"/>
<dbReference type="FunCoup" id="B4MDZ0">
    <property type="interactions" value="386"/>
</dbReference>
<dbReference type="STRING" id="7244.B4MDZ0"/>
<dbReference type="EnsemblMetazoa" id="FBtr0233751">
    <property type="protein sequence ID" value="FBpp0232243"/>
    <property type="gene ID" value="FBgn0204994"/>
</dbReference>
<dbReference type="EnsemblMetazoa" id="XM_002059307.3">
    <property type="protein sequence ID" value="XP_002059343.1"/>
    <property type="gene ID" value="LOC6635869"/>
</dbReference>
<dbReference type="GeneID" id="6635869"/>
<dbReference type="KEGG" id="dvi:6635869"/>
<dbReference type="CTD" id="35547"/>
<dbReference type="eggNOG" id="KOG2975">
    <property type="taxonomic scope" value="Eukaryota"/>
</dbReference>
<dbReference type="HOGENOM" id="CLU_027018_0_2_1"/>
<dbReference type="InParanoid" id="B4MDZ0"/>
<dbReference type="OMA" id="IEITNCF"/>
<dbReference type="OrthoDB" id="25498at2759"/>
<dbReference type="PhylomeDB" id="B4MDZ0"/>
<dbReference type="Proteomes" id="UP000008792">
    <property type="component" value="Unassembled WGS sequence"/>
</dbReference>
<dbReference type="GO" id="GO:0016282">
    <property type="term" value="C:eukaryotic 43S preinitiation complex"/>
    <property type="evidence" value="ECO:0007669"/>
    <property type="project" value="UniProtKB-UniRule"/>
</dbReference>
<dbReference type="GO" id="GO:0033290">
    <property type="term" value="C:eukaryotic 48S preinitiation complex"/>
    <property type="evidence" value="ECO:0007669"/>
    <property type="project" value="UniProtKB-UniRule"/>
</dbReference>
<dbReference type="GO" id="GO:0071541">
    <property type="term" value="C:eukaryotic translation initiation factor 3 complex, eIF3m"/>
    <property type="evidence" value="ECO:0007669"/>
    <property type="project" value="TreeGrafter"/>
</dbReference>
<dbReference type="GO" id="GO:0008237">
    <property type="term" value="F:metallopeptidase activity"/>
    <property type="evidence" value="ECO:0007669"/>
    <property type="project" value="InterPro"/>
</dbReference>
<dbReference type="GO" id="GO:0003743">
    <property type="term" value="F:translation initiation factor activity"/>
    <property type="evidence" value="ECO:0007669"/>
    <property type="project" value="UniProtKB-UniRule"/>
</dbReference>
<dbReference type="GO" id="GO:0031369">
    <property type="term" value="F:translation initiation factor binding"/>
    <property type="evidence" value="ECO:0007669"/>
    <property type="project" value="InterPro"/>
</dbReference>
<dbReference type="GO" id="GO:0001732">
    <property type="term" value="P:formation of cytoplasmic translation initiation complex"/>
    <property type="evidence" value="ECO:0007669"/>
    <property type="project" value="UniProtKB-UniRule"/>
</dbReference>
<dbReference type="CDD" id="cd08064">
    <property type="entry name" value="MPN_eIF3f"/>
    <property type="match status" value="1"/>
</dbReference>
<dbReference type="Gene3D" id="3.40.140.10">
    <property type="entry name" value="Cytidine Deaminase, domain 2"/>
    <property type="match status" value="1"/>
</dbReference>
<dbReference type="HAMAP" id="MF_03005">
    <property type="entry name" value="eIF3f"/>
    <property type="match status" value="1"/>
</dbReference>
<dbReference type="InterPro" id="IPR027531">
    <property type="entry name" value="eIF3f"/>
</dbReference>
<dbReference type="InterPro" id="IPR024969">
    <property type="entry name" value="EIF3F/CSN6-like_C"/>
</dbReference>
<dbReference type="InterPro" id="IPR000555">
    <property type="entry name" value="JAMM/MPN+_dom"/>
</dbReference>
<dbReference type="InterPro" id="IPR037518">
    <property type="entry name" value="MPN"/>
</dbReference>
<dbReference type="PANTHER" id="PTHR10540:SF6">
    <property type="entry name" value="EUKARYOTIC TRANSLATION INITIATION FACTOR 3 SUBUNIT F"/>
    <property type="match status" value="1"/>
</dbReference>
<dbReference type="PANTHER" id="PTHR10540">
    <property type="entry name" value="EUKARYOTIC TRANSLATION INITIATION FACTOR 3 SUBUNIT F-RELATED"/>
    <property type="match status" value="1"/>
</dbReference>
<dbReference type="Pfam" id="PF01398">
    <property type="entry name" value="JAB"/>
    <property type="match status" value="1"/>
</dbReference>
<dbReference type="Pfam" id="PF13012">
    <property type="entry name" value="MitMem_reg"/>
    <property type="match status" value="1"/>
</dbReference>
<dbReference type="SMART" id="SM00232">
    <property type="entry name" value="JAB_MPN"/>
    <property type="match status" value="1"/>
</dbReference>
<dbReference type="PROSITE" id="PS50249">
    <property type="entry name" value="MPN"/>
    <property type="match status" value="1"/>
</dbReference>
<feature type="chain" id="PRO_0000364316" description="Eukaryotic translation initiation factor 3 subunit F-2">
    <location>
        <begin position="1"/>
        <end position="290"/>
    </location>
</feature>
<feature type="domain" description="MPN" evidence="2">
    <location>
        <begin position="12"/>
        <end position="150"/>
    </location>
</feature>
<keyword id="KW-0963">Cytoplasm</keyword>
<keyword id="KW-0396">Initiation factor</keyword>
<keyword id="KW-0648">Protein biosynthesis</keyword>
<keyword id="KW-1185">Reference proteome</keyword>
<comment type="function">
    <text evidence="1">Component of the eukaryotic translation initiation factor 3 (eIF-3) complex, which is involved in protein synthesis of a specialized repertoire of mRNAs and, together with other initiation factors, stimulates binding of mRNA and methionyl-tRNAi to the 40S ribosome. The eIF-3 complex specifically targets and initiates translation of a subset of mRNAs involved in cell proliferation.</text>
</comment>
<comment type="subunit">
    <text evidence="1">Component of the eukaryotic translation initiation factor 3 (eIF-3) complex. The eIF-3 complex interacts with pix.</text>
</comment>
<comment type="subcellular location">
    <subcellularLocation>
        <location evidence="1">Cytoplasm</location>
    </subcellularLocation>
</comment>
<comment type="similarity">
    <text evidence="1">Belongs to the eIF-3 subunit F family.</text>
</comment>
<organism>
    <name type="scientific">Drosophila virilis</name>
    <name type="common">Fruit fly</name>
    <dbReference type="NCBI Taxonomy" id="7244"/>
    <lineage>
        <taxon>Eukaryota</taxon>
        <taxon>Metazoa</taxon>
        <taxon>Ecdysozoa</taxon>
        <taxon>Arthropoda</taxon>
        <taxon>Hexapoda</taxon>
        <taxon>Insecta</taxon>
        <taxon>Pterygota</taxon>
        <taxon>Neoptera</taxon>
        <taxon>Endopterygota</taxon>
        <taxon>Diptera</taxon>
        <taxon>Brachycera</taxon>
        <taxon>Muscomorpha</taxon>
        <taxon>Ephydroidea</taxon>
        <taxon>Drosophilidae</taxon>
        <taxon>Drosophila</taxon>
    </lineage>
</organism>
<proteinExistence type="inferred from homology"/>